<comment type="function">
    <text>Self-incompatibility (SI) is the inherited ability of a flowering plant to prevent self-fertilization by discriminating between self and non-self pollen during pollination. In many species of the Solanaceae, self-incompatibility is controlled by the single, multiallelic locus S. This stylar glycoprotein is associated with expression of self-incompatibility in potato.</text>
</comment>
<comment type="catalytic activity">
    <reaction evidence="6 7">
        <text>a ribonucleotidyl-ribonucleotide-RNA + H2O = a 3'-end 3'-phospho-ribonucleotide-RNA + a 5'-end dephospho-ribonucleoside-RNA + H(+)</text>
        <dbReference type="Rhea" id="RHEA:68052"/>
        <dbReference type="Rhea" id="RHEA-COMP:10463"/>
        <dbReference type="Rhea" id="RHEA-COMP:13936"/>
        <dbReference type="Rhea" id="RHEA-COMP:17355"/>
        <dbReference type="ChEBI" id="CHEBI:15377"/>
        <dbReference type="ChEBI" id="CHEBI:15378"/>
        <dbReference type="ChEBI" id="CHEBI:83062"/>
        <dbReference type="ChEBI" id="CHEBI:138284"/>
        <dbReference type="ChEBI" id="CHEBI:173118"/>
        <dbReference type="EC" id="4.6.1.19"/>
    </reaction>
</comment>
<comment type="subcellular location">
    <subcellularLocation>
        <location>Secreted</location>
        <location>Extracellular space</location>
    </subcellularLocation>
</comment>
<comment type="tissue specificity">
    <text>Pistil.</text>
</comment>
<comment type="similarity">
    <text evidence="8">Belongs to the RNase T2 family.</text>
</comment>
<comment type="caution">
    <text evidence="8">Gln-112 is present instead of the conserved Glu which is expected to act as an active site proton donor.</text>
</comment>
<keyword id="KW-1015">Disulfide bond</keyword>
<keyword id="KW-0255">Endonuclease</keyword>
<keyword id="KW-0325">Glycoprotein</keyword>
<keyword id="KW-0378">Hydrolase</keyword>
<keyword id="KW-0456">Lyase</keyword>
<keyword id="KW-0540">Nuclease</keyword>
<keyword id="KW-1185">Reference proteome</keyword>
<keyword id="KW-0964">Secreted</keyword>
<keyword id="KW-0732">Signal</keyword>
<protein>
    <recommendedName>
        <fullName>Ribonuclease S-2</fullName>
        <ecNumber evidence="7">4.6.1.19</ecNumber>
    </recommendedName>
    <alternativeName>
        <fullName>S2-RNase</fullName>
    </alternativeName>
    <alternativeName>
        <fullName>Stylar glycoprotein 2</fullName>
    </alternativeName>
</protein>
<name>RNS2_SOLTU</name>
<proteinExistence type="evidence at transcript level"/>
<evidence type="ECO:0000250" key="1">
    <source>
        <dbReference type="UniProtKB" id="P08056"/>
    </source>
</evidence>
<evidence type="ECO:0000250" key="2">
    <source>
        <dbReference type="UniProtKB" id="P23540"/>
    </source>
</evidence>
<evidence type="ECO:0000250" key="3">
    <source>
        <dbReference type="UniProtKB" id="Q7SID5"/>
    </source>
</evidence>
<evidence type="ECO:0000255" key="4"/>
<evidence type="ECO:0000255" key="5">
    <source>
        <dbReference type="PROSITE-ProRule" id="PRU00498"/>
    </source>
</evidence>
<evidence type="ECO:0000255" key="6">
    <source>
        <dbReference type="PROSITE-ProRule" id="PRU10045"/>
    </source>
</evidence>
<evidence type="ECO:0000255" key="7">
    <source>
        <dbReference type="PROSITE-ProRule" id="PRU10046"/>
    </source>
</evidence>
<evidence type="ECO:0000305" key="8"/>
<feature type="signal peptide" evidence="4">
    <location>
        <begin position="1"/>
        <end position="22"/>
    </location>
</feature>
<feature type="chain" id="PRO_0000030986" description="Ribonuclease S-2">
    <location>
        <begin position="23"/>
        <end position="223"/>
    </location>
</feature>
<feature type="active site" description="Proton donor" evidence="3 6">
    <location>
        <position position="55"/>
    </location>
</feature>
<feature type="active site" evidence="1">
    <location>
        <position position="112"/>
    </location>
</feature>
<feature type="active site" description="Proton acceptor" evidence="3 6">
    <location>
        <position position="116"/>
    </location>
</feature>
<feature type="binding site" evidence="2">
    <location>
        <position position="55"/>
    </location>
    <ligand>
        <name>RNA</name>
        <dbReference type="ChEBI" id="CHEBI:33697"/>
    </ligand>
    <ligandPart>
        <name>a 3'-terminal ribonucleotide 3'-phosphate residue</name>
        <dbReference type="ChEBI" id="CHEBI:83062"/>
    </ligandPart>
</feature>
<feature type="binding site" evidence="2">
    <location>
        <begin position="94"/>
        <end position="95"/>
    </location>
    <ligand>
        <name>RNA</name>
        <dbReference type="ChEBI" id="CHEBI:33697"/>
    </ligand>
    <ligandPart>
        <name>a 3'-terminal ribonucleotide 3'-phosphate residue</name>
        <dbReference type="ChEBI" id="CHEBI:83062"/>
    </ligandPart>
</feature>
<feature type="binding site" evidence="2">
    <location>
        <begin position="115"/>
        <end position="116"/>
    </location>
    <ligand>
        <name>RNA</name>
        <dbReference type="ChEBI" id="CHEBI:33697"/>
    </ligand>
    <ligandPart>
        <name>a 3'-terminal ribonucleotide 3'-phosphate residue</name>
        <dbReference type="ChEBI" id="CHEBI:83062"/>
    </ligandPart>
</feature>
<feature type="glycosylation site" description="N-linked (GlcNAc...) asparagine" evidence="5">
    <location>
        <position position="51"/>
    </location>
</feature>
<feature type="disulfide bond" evidence="3">
    <location>
        <begin position="38"/>
        <end position="44"/>
    </location>
</feature>
<feature type="disulfide bond" evidence="1">
    <location>
        <begin position="71"/>
        <end position="119"/>
    </location>
</feature>
<feature type="disulfide bond" evidence="1">
    <location>
        <begin position="178"/>
        <end position="211"/>
    </location>
</feature>
<feature type="disulfide bond" evidence="2">
    <location>
        <begin position="194"/>
        <end position="205"/>
    </location>
</feature>
<accession>Q01796</accession>
<sequence>MAKSQLVSALFVFFFSLSPIYGDFDYMQLVLTWPRSFCYPRGFCNRIPPNNFTIHGLWPDKKPMRGQLQFCTSDDYIKFTPGSVLDALDHHWIQLKFEREIGIRDQPLWKDQYKKHGTCCLPRYNQLQYFLLAMRLKEKFDLLTTLRTHGITPGTKHTFKKIQDAIKTVTQEVPDLKCVENIQGVLELYEIGICFTPEADSLFPCRQSKSCHPTENPLILFRL</sequence>
<reference key="1">
    <citation type="journal article" date="1991" name="Mol. Gen. Genet.">
        <title>Sequence variability and gene structure at the self-incompatibility locus of Solanum tuberosum.</title>
        <authorList>
            <person name="Kaufmann H."/>
            <person name="Salamini F."/>
            <person name="Thompson R.D."/>
        </authorList>
    </citation>
    <scope>NUCLEOTIDE SEQUENCE [GENOMIC DNA]</scope>
</reference>
<organism>
    <name type="scientific">Solanum tuberosum</name>
    <name type="common">Potato</name>
    <dbReference type="NCBI Taxonomy" id="4113"/>
    <lineage>
        <taxon>Eukaryota</taxon>
        <taxon>Viridiplantae</taxon>
        <taxon>Streptophyta</taxon>
        <taxon>Embryophyta</taxon>
        <taxon>Tracheophyta</taxon>
        <taxon>Spermatophyta</taxon>
        <taxon>Magnoliopsida</taxon>
        <taxon>eudicotyledons</taxon>
        <taxon>Gunneridae</taxon>
        <taxon>Pentapetalae</taxon>
        <taxon>asterids</taxon>
        <taxon>lamiids</taxon>
        <taxon>Solanales</taxon>
        <taxon>Solanaceae</taxon>
        <taxon>Solanoideae</taxon>
        <taxon>Solaneae</taxon>
        <taxon>Solanum</taxon>
    </lineage>
</organism>
<dbReference type="EC" id="4.6.1.19" evidence="7"/>
<dbReference type="EMBL" id="X62727">
    <property type="protein sequence ID" value="CAA44600.1"/>
    <property type="molecule type" value="Genomic_DNA"/>
</dbReference>
<dbReference type="PIR" id="PQ0749">
    <property type="entry name" value="PQ0749"/>
</dbReference>
<dbReference type="PIR" id="S16007">
    <property type="entry name" value="S16007"/>
</dbReference>
<dbReference type="SMR" id="Q01796"/>
<dbReference type="STRING" id="4113.Q01796"/>
<dbReference type="InParanoid" id="Q01796"/>
<dbReference type="Proteomes" id="UP000011115">
    <property type="component" value="Unassembled WGS sequence"/>
</dbReference>
<dbReference type="ExpressionAtlas" id="Q01796">
    <property type="expression patterns" value="baseline"/>
</dbReference>
<dbReference type="GO" id="GO:0005576">
    <property type="term" value="C:extracellular region"/>
    <property type="evidence" value="ECO:0000318"/>
    <property type="project" value="GO_Central"/>
</dbReference>
<dbReference type="GO" id="GO:0033897">
    <property type="term" value="F:ribonuclease T2 activity"/>
    <property type="evidence" value="ECO:0007669"/>
    <property type="project" value="UniProtKB-EC"/>
</dbReference>
<dbReference type="GO" id="GO:0003723">
    <property type="term" value="F:RNA binding"/>
    <property type="evidence" value="ECO:0007669"/>
    <property type="project" value="InterPro"/>
</dbReference>
<dbReference type="GO" id="GO:0004521">
    <property type="term" value="F:RNA endonuclease activity"/>
    <property type="evidence" value="ECO:0000318"/>
    <property type="project" value="GO_Central"/>
</dbReference>
<dbReference type="GO" id="GO:0006401">
    <property type="term" value="P:RNA catabolic process"/>
    <property type="evidence" value="ECO:0000318"/>
    <property type="project" value="GO_Central"/>
</dbReference>
<dbReference type="CDD" id="cd01061">
    <property type="entry name" value="RNase_T2_euk"/>
    <property type="match status" value="1"/>
</dbReference>
<dbReference type="Gene3D" id="3.90.730.10">
    <property type="entry name" value="Ribonuclease T2-like"/>
    <property type="match status" value="1"/>
</dbReference>
<dbReference type="InterPro" id="IPR033697">
    <property type="entry name" value="Ribonuclease_T2_eukaryotic"/>
</dbReference>
<dbReference type="InterPro" id="IPR001568">
    <property type="entry name" value="RNase_T2-like"/>
</dbReference>
<dbReference type="InterPro" id="IPR036430">
    <property type="entry name" value="RNase_T2-like_sf"/>
</dbReference>
<dbReference type="InterPro" id="IPR018188">
    <property type="entry name" value="RNase_T2_His_AS_1"/>
</dbReference>
<dbReference type="InterPro" id="IPR033130">
    <property type="entry name" value="RNase_T2_His_AS_2"/>
</dbReference>
<dbReference type="PANTHER" id="PTHR11240:SF81">
    <property type="entry name" value="RIBONUCLEASE S-2"/>
    <property type="match status" value="1"/>
</dbReference>
<dbReference type="PANTHER" id="PTHR11240">
    <property type="entry name" value="RIBONUCLEASE T2"/>
    <property type="match status" value="1"/>
</dbReference>
<dbReference type="Pfam" id="PF00445">
    <property type="entry name" value="Ribonuclease_T2"/>
    <property type="match status" value="1"/>
</dbReference>
<dbReference type="SUPFAM" id="SSF55895">
    <property type="entry name" value="Ribonuclease Rh-like"/>
    <property type="match status" value="1"/>
</dbReference>
<dbReference type="PROSITE" id="PS00530">
    <property type="entry name" value="RNASE_T2_1"/>
    <property type="match status" value="1"/>
</dbReference>
<dbReference type="PROSITE" id="PS00531">
    <property type="entry name" value="RNASE_T2_2"/>
    <property type="match status" value="1"/>
</dbReference>